<name>RLMN_THEP1</name>
<organism>
    <name type="scientific">Thermotoga petrophila (strain ATCC BAA-488 / DSM 13995 / JCM 10881 / RKU-1)</name>
    <dbReference type="NCBI Taxonomy" id="390874"/>
    <lineage>
        <taxon>Bacteria</taxon>
        <taxon>Thermotogati</taxon>
        <taxon>Thermotogota</taxon>
        <taxon>Thermotogae</taxon>
        <taxon>Thermotogales</taxon>
        <taxon>Thermotogaceae</taxon>
        <taxon>Thermotoga</taxon>
    </lineage>
</organism>
<reference key="1">
    <citation type="submission" date="2007-05" db="EMBL/GenBank/DDBJ databases">
        <title>Complete sequence of Thermotoga petrophila RKU-1.</title>
        <authorList>
            <consortium name="US DOE Joint Genome Institute"/>
            <person name="Copeland A."/>
            <person name="Lucas S."/>
            <person name="Lapidus A."/>
            <person name="Barry K."/>
            <person name="Glavina del Rio T."/>
            <person name="Dalin E."/>
            <person name="Tice H."/>
            <person name="Pitluck S."/>
            <person name="Sims D."/>
            <person name="Brettin T."/>
            <person name="Bruce D."/>
            <person name="Detter J.C."/>
            <person name="Han C."/>
            <person name="Tapia R."/>
            <person name="Schmutz J."/>
            <person name="Larimer F."/>
            <person name="Land M."/>
            <person name="Hauser L."/>
            <person name="Kyrpides N."/>
            <person name="Mikhailova N."/>
            <person name="Nelson K."/>
            <person name="Gogarten J.P."/>
            <person name="Noll K."/>
            <person name="Richardson P."/>
        </authorList>
    </citation>
    <scope>NUCLEOTIDE SEQUENCE [LARGE SCALE GENOMIC DNA]</scope>
    <source>
        <strain>ATCC BAA-488 / DSM 13995 / JCM 10881 / RKU-1</strain>
    </source>
</reference>
<protein>
    <recommendedName>
        <fullName evidence="1">Probable dual-specificity RNA methyltransferase RlmN</fullName>
        <ecNumber evidence="1">2.1.1.192</ecNumber>
    </recommendedName>
    <alternativeName>
        <fullName evidence="1">23S rRNA (adenine(2503)-C(2))-methyltransferase</fullName>
    </alternativeName>
    <alternativeName>
        <fullName evidence="1">23S rRNA m2A2503 methyltransferase</fullName>
    </alternativeName>
    <alternativeName>
        <fullName evidence="1">Ribosomal RNA large subunit methyltransferase N</fullName>
    </alternativeName>
    <alternativeName>
        <fullName evidence="1">tRNA (adenine(37)-C(2))-methyltransferase</fullName>
    </alternativeName>
    <alternativeName>
        <fullName evidence="1">tRNA m2A37 methyltransferase</fullName>
    </alternativeName>
</protein>
<proteinExistence type="inferred from homology"/>
<keyword id="KW-0004">4Fe-4S</keyword>
<keyword id="KW-0963">Cytoplasm</keyword>
<keyword id="KW-1015">Disulfide bond</keyword>
<keyword id="KW-0408">Iron</keyword>
<keyword id="KW-0411">Iron-sulfur</keyword>
<keyword id="KW-0479">Metal-binding</keyword>
<keyword id="KW-0489">Methyltransferase</keyword>
<keyword id="KW-0698">rRNA processing</keyword>
<keyword id="KW-0949">S-adenosyl-L-methionine</keyword>
<keyword id="KW-0808">Transferase</keyword>
<keyword id="KW-0819">tRNA processing</keyword>
<accession>A5ILF6</accession>
<evidence type="ECO:0000255" key="1">
    <source>
        <dbReference type="HAMAP-Rule" id="MF_01849"/>
    </source>
</evidence>
<evidence type="ECO:0000255" key="2">
    <source>
        <dbReference type="PROSITE-ProRule" id="PRU01266"/>
    </source>
</evidence>
<sequence>MKNLLDLSYEELITEITNLGLERYRADQILDWIFNKKVNNFDEMTNLSKKHRALLKEHFSIPFLKLLDKKVSRIDGTTKFLWELEDGNTIESVMLFHPDRITACISTQVGCPVKCIFCATGMSGFVRNLTTGEIVAQILSMEKEEKKKIGNVVYMGMGEPLLNYENTIKSIRTLNHKKMGNIGIRRITISTVGIPDRIIQLAEEGLDVKLALSLHAPTNFKRDQLVPLNKKYSIEEILNAVKIYQKKTGNRVTIEYVLIKGMNDEISDAKKLAEILKNMKVFVNLIPVNPTVEDLKKPSRERLLTFKRILLESGIEAEIRREKGADIEAACGQLRLKRIKSTS</sequence>
<feature type="chain" id="PRO_0000350501" description="Probable dual-specificity RNA methyltransferase RlmN">
    <location>
        <begin position="1"/>
        <end position="343"/>
    </location>
</feature>
<feature type="domain" description="Radical SAM core" evidence="2">
    <location>
        <begin position="97"/>
        <end position="326"/>
    </location>
</feature>
<feature type="active site" description="Proton acceptor" evidence="1">
    <location>
        <position position="91"/>
    </location>
</feature>
<feature type="active site" description="S-methylcysteine intermediate" evidence="1">
    <location>
        <position position="331"/>
    </location>
</feature>
<feature type="binding site" evidence="1">
    <location>
        <position position="111"/>
    </location>
    <ligand>
        <name>[4Fe-4S] cluster</name>
        <dbReference type="ChEBI" id="CHEBI:49883"/>
        <note>4Fe-4S-S-AdoMet</note>
    </ligand>
</feature>
<feature type="binding site" evidence="1">
    <location>
        <position position="115"/>
    </location>
    <ligand>
        <name>[4Fe-4S] cluster</name>
        <dbReference type="ChEBI" id="CHEBI:49883"/>
        <note>4Fe-4S-S-AdoMet</note>
    </ligand>
</feature>
<feature type="binding site" evidence="1">
    <location>
        <position position="118"/>
    </location>
    <ligand>
        <name>[4Fe-4S] cluster</name>
        <dbReference type="ChEBI" id="CHEBI:49883"/>
        <note>4Fe-4S-S-AdoMet</note>
    </ligand>
</feature>
<feature type="binding site" evidence="1">
    <location>
        <begin position="158"/>
        <end position="159"/>
    </location>
    <ligand>
        <name>S-adenosyl-L-methionine</name>
        <dbReference type="ChEBI" id="CHEBI:59789"/>
    </ligand>
</feature>
<feature type="binding site" evidence="1">
    <location>
        <position position="190"/>
    </location>
    <ligand>
        <name>S-adenosyl-L-methionine</name>
        <dbReference type="ChEBI" id="CHEBI:59789"/>
    </ligand>
</feature>
<feature type="binding site" evidence="1">
    <location>
        <begin position="213"/>
        <end position="215"/>
    </location>
    <ligand>
        <name>S-adenosyl-L-methionine</name>
        <dbReference type="ChEBI" id="CHEBI:59789"/>
    </ligand>
</feature>
<feature type="binding site" evidence="1">
    <location>
        <position position="289"/>
    </location>
    <ligand>
        <name>S-adenosyl-L-methionine</name>
        <dbReference type="ChEBI" id="CHEBI:59789"/>
    </ligand>
</feature>
<feature type="disulfide bond" description="(transient)" evidence="1">
    <location>
        <begin position="104"/>
        <end position="331"/>
    </location>
</feature>
<dbReference type="EC" id="2.1.1.192" evidence="1"/>
<dbReference type="EMBL" id="CP000702">
    <property type="protein sequence ID" value="ABQ47029.1"/>
    <property type="molecule type" value="Genomic_DNA"/>
</dbReference>
<dbReference type="RefSeq" id="WP_011943565.1">
    <property type="nucleotide sequence ID" value="NC_009486.1"/>
</dbReference>
<dbReference type="SMR" id="A5ILF6"/>
<dbReference type="STRING" id="390874.Tpet_1011"/>
<dbReference type="KEGG" id="tpt:Tpet_1011"/>
<dbReference type="eggNOG" id="COG0820">
    <property type="taxonomic scope" value="Bacteria"/>
</dbReference>
<dbReference type="HOGENOM" id="CLU_029101_2_0_0"/>
<dbReference type="Proteomes" id="UP000006558">
    <property type="component" value="Chromosome"/>
</dbReference>
<dbReference type="GO" id="GO:0005737">
    <property type="term" value="C:cytoplasm"/>
    <property type="evidence" value="ECO:0007669"/>
    <property type="project" value="UniProtKB-SubCell"/>
</dbReference>
<dbReference type="GO" id="GO:0051539">
    <property type="term" value="F:4 iron, 4 sulfur cluster binding"/>
    <property type="evidence" value="ECO:0007669"/>
    <property type="project" value="UniProtKB-UniRule"/>
</dbReference>
<dbReference type="GO" id="GO:0046872">
    <property type="term" value="F:metal ion binding"/>
    <property type="evidence" value="ECO:0007669"/>
    <property type="project" value="UniProtKB-KW"/>
</dbReference>
<dbReference type="GO" id="GO:0070040">
    <property type="term" value="F:rRNA (adenine(2503)-C2-)-methyltransferase activity"/>
    <property type="evidence" value="ECO:0007669"/>
    <property type="project" value="UniProtKB-UniRule"/>
</dbReference>
<dbReference type="GO" id="GO:0019843">
    <property type="term" value="F:rRNA binding"/>
    <property type="evidence" value="ECO:0007669"/>
    <property type="project" value="UniProtKB-UniRule"/>
</dbReference>
<dbReference type="GO" id="GO:0002935">
    <property type="term" value="F:tRNA (adenine(37)-C2)-methyltransferase activity"/>
    <property type="evidence" value="ECO:0007669"/>
    <property type="project" value="UniProtKB-UniRule"/>
</dbReference>
<dbReference type="GO" id="GO:0000049">
    <property type="term" value="F:tRNA binding"/>
    <property type="evidence" value="ECO:0007669"/>
    <property type="project" value="UniProtKB-UniRule"/>
</dbReference>
<dbReference type="GO" id="GO:0070475">
    <property type="term" value="P:rRNA base methylation"/>
    <property type="evidence" value="ECO:0007669"/>
    <property type="project" value="UniProtKB-UniRule"/>
</dbReference>
<dbReference type="GO" id="GO:0030488">
    <property type="term" value="P:tRNA methylation"/>
    <property type="evidence" value="ECO:0007669"/>
    <property type="project" value="UniProtKB-UniRule"/>
</dbReference>
<dbReference type="CDD" id="cd01335">
    <property type="entry name" value="Radical_SAM"/>
    <property type="match status" value="1"/>
</dbReference>
<dbReference type="FunFam" id="1.10.150.530:FF:000006">
    <property type="entry name" value="Probable dual-specificity RNA methyltransferase RlmN"/>
    <property type="match status" value="1"/>
</dbReference>
<dbReference type="FunFam" id="3.20.20.70:FF:000014">
    <property type="entry name" value="Probable dual-specificity RNA methyltransferase RlmN"/>
    <property type="match status" value="1"/>
</dbReference>
<dbReference type="Gene3D" id="1.10.150.530">
    <property type="match status" value="1"/>
</dbReference>
<dbReference type="Gene3D" id="3.20.20.70">
    <property type="entry name" value="Aldolase class I"/>
    <property type="match status" value="1"/>
</dbReference>
<dbReference type="HAMAP" id="MF_01849">
    <property type="entry name" value="RNA_methyltr_RlmN"/>
    <property type="match status" value="1"/>
</dbReference>
<dbReference type="InterPro" id="IPR013785">
    <property type="entry name" value="Aldolase_TIM"/>
</dbReference>
<dbReference type="InterPro" id="IPR006638">
    <property type="entry name" value="Elp3/MiaA/NifB-like_rSAM"/>
</dbReference>
<dbReference type="InterPro" id="IPR040072">
    <property type="entry name" value="Methyltransferase_A"/>
</dbReference>
<dbReference type="InterPro" id="IPR048641">
    <property type="entry name" value="RlmN_N"/>
</dbReference>
<dbReference type="InterPro" id="IPR027492">
    <property type="entry name" value="RNA_MTrfase_RlmN"/>
</dbReference>
<dbReference type="InterPro" id="IPR004383">
    <property type="entry name" value="rRNA_lsu_MTrfase_RlmN/Cfr"/>
</dbReference>
<dbReference type="InterPro" id="IPR007197">
    <property type="entry name" value="rSAM"/>
</dbReference>
<dbReference type="NCBIfam" id="TIGR00048">
    <property type="entry name" value="rRNA_mod_RlmN"/>
    <property type="match status" value="1"/>
</dbReference>
<dbReference type="PANTHER" id="PTHR30544">
    <property type="entry name" value="23S RRNA METHYLTRANSFERASE"/>
    <property type="match status" value="1"/>
</dbReference>
<dbReference type="PANTHER" id="PTHR30544:SF5">
    <property type="entry name" value="RADICAL SAM CORE DOMAIN-CONTAINING PROTEIN"/>
    <property type="match status" value="1"/>
</dbReference>
<dbReference type="Pfam" id="PF04055">
    <property type="entry name" value="Radical_SAM"/>
    <property type="match status" value="1"/>
</dbReference>
<dbReference type="Pfam" id="PF21016">
    <property type="entry name" value="RlmN_N"/>
    <property type="match status" value="1"/>
</dbReference>
<dbReference type="PIRSF" id="PIRSF006004">
    <property type="entry name" value="CHP00048"/>
    <property type="match status" value="1"/>
</dbReference>
<dbReference type="SFLD" id="SFLDF00275">
    <property type="entry name" value="adenosine_C2_methyltransferase"/>
    <property type="match status" value="1"/>
</dbReference>
<dbReference type="SFLD" id="SFLDG01062">
    <property type="entry name" value="methyltransferase_(Class_A)"/>
    <property type="match status" value="1"/>
</dbReference>
<dbReference type="SMART" id="SM00729">
    <property type="entry name" value="Elp3"/>
    <property type="match status" value="1"/>
</dbReference>
<dbReference type="SUPFAM" id="SSF102114">
    <property type="entry name" value="Radical SAM enzymes"/>
    <property type="match status" value="1"/>
</dbReference>
<dbReference type="PROSITE" id="PS51918">
    <property type="entry name" value="RADICAL_SAM"/>
    <property type="match status" value="1"/>
</dbReference>
<gene>
    <name evidence="1" type="primary">rlmN</name>
    <name type="ordered locus">Tpet_1011</name>
</gene>
<comment type="function">
    <text evidence="1">Specifically methylates position 2 of adenine 2503 in 23S rRNA and position 2 of adenine 37 in tRNAs.</text>
</comment>
<comment type="catalytic activity">
    <reaction evidence="1">
        <text>adenosine(2503) in 23S rRNA + 2 reduced [2Fe-2S]-[ferredoxin] + 2 S-adenosyl-L-methionine = 2-methyladenosine(2503) in 23S rRNA + 5'-deoxyadenosine + L-methionine + 2 oxidized [2Fe-2S]-[ferredoxin] + S-adenosyl-L-homocysteine</text>
        <dbReference type="Rhea" id="RHEA:42916"/>
        <dbReference type="Rhea" id="RHEA-COMP:10000"/>
        <dbReference type="Rhea" id="RHEA-COMP:10001"/>
        <dbReference type="Rhea" id="RHEA-COMP:10152"/>
        <dbReference type="Rhea" id="RHEA-COMP:10282"/>
        <dbReference type="ChEBI" id="CHEBI:17319"/>
        <dbReference type="ChEBI" id="CHEBI:33737"/>
        <dbReference type="ChEBI" id="CHEBI:33738"/>
        <dbReference type="ChEBI" id="CHEBI:57844"/>
        <dbReference type="ChEBI" id="CHEBI:57856"/>
        <dbReference type="ChEBI" id="CHEBI:59789"/>
        <dbReference type="ChEBI" id="CHEBI:74411"/>
        <dbReference type="ChEBI" id="CHEBI:74497"/>
        <dbReference type="EC" id="2.1.1.192"/>
    </reaction>
</comment>
<comment type="catalytic activity">
    <reaction evidence="1">
        <text>adenosine(37) in tRNA + 2 reduced [2Fe-2S]-[ferredoxin] + 2 S-adenosyl-L-methionine = 2-methyladenosine(37) in tRNA + 5'-deoxyadenosine + L-methionine + 2 oxidized [2Fe-2S]-[ferredoxin] + S-adenosyl-L-homocysteine</text>
        <dbReference type="Rhea" id="RHEA:43332"/>
        <dbReference type="Rhea" id="RHEA-COMP:10000"/>
        <dbReference type="Rhea" id="RHEA-COMP:10001"/>
        <dbReference type="Rhea" id="RHEA-COMP:10162"/>
        <dbReference type="Rhea" id="RHEA-COMP:10485"/>
        <dbReference type="ChEBI" id="CHEBI:17319"/>
        <dbReference type="ChEBI" id="CHEBI:33737"/>
        <dbReference type="ChEBI" id="CHEBI:33738"/>
        <dbReference type="ChEBI" id="CHEBI:57844"/>
        <dbReference type="ChEBI" id="CHEBI:57856"/>
        <dbReference type="ChEBI" id="CHEBI:59789"/>
        <dbReference type="ChEBI" id="CHEBI:74411"/>
        <dbReference type="ChEBI" id="CHEBI:74497"/>
        <dbReference type="EC" id="2.1.1.192"/>
    </reaction>
</comment>
<comment type="cofactor">
    <cofactor evidence="1">
        <name>[4Fe-4S] cluster</name>
        <dbReference type="ChEBI" id="CHEBI:49883"/>
    </cofactor>
    <text evidence="1">Binds 1 [4Fe-4S] cluster. The cluster is coordinated with 3 cysteines and an exchangeable S-adenosyl-L-methionine.</text>
</comment>
<comment type="subcellular location">
    <subcellularLocation>
        <location evidence="1">Cytoplasm</location>
    </subcellularLocation>
</comment>
<comment type="miscellaneous">
    <text evidence="1">Reaction proceeds by a ping-pong mechanism involving intermediate methylation of a conserved cysteine residue.</text>
</comment>
<comment type="similarity">
    <text evidence="1">Belongs to the radical SAM superfamily. RlmN family.</text>
</comment>